<dbReference type="EMBL" id="CP001172">
    <property type="protein sequence ID" value="ACJ59251.1"/>
    <property type="status" value="ALT_INIT"/>
    <property type="molecule type" value="Genomic_DNA"/>
</dbReference>
<dbReference type="RefSeq" id="WP_000543500.1">
    <property type="nucleotide sequence ID" value="NZ_CP001172.1"/>
</dbReference>
<dbReference type="SMR" id="B7H3B2"/>
<dbReference type="HOGENOM" id="CLU_155118_0_1_6"/>
<dbReference type="Proteomes" id="UP000006924">
    <property type="component" value="Chromosome"/>
</dbReference>
<dbReference type="Gene3D" id="3.10.510.20">
    <property type="entry name" value="YcgL domain"/>
    <property type="match status" value="1"/>
</dbReference>
<dbReference type="HAMAP" id="MF_01866">
    <property type="entry name" value="UPF0745"/>
    <property type="match status" value="1"/>
</dbReference>
<dbReference type="InterPro" id="IPR038068">
    <property type="entry name" value="YcgL-like_sf"/>
</dbReference>
<dbReference type="InterPro" id="IPR027354">
    <property type="entry name" value="YcgL_dom"/>
</dbReference>
<dbReference type="PANTHER" id="PTHR38109">
    <property type="entry name" value="PROTEIN YCGL"/>
    <property type="match status" value="1"/>
</dbReference>
<dbReference type="PANTHER" id="PTHR38109:SF1">
    <property type="entry name" value="PROTEIN YCGL"/>
    <property type="match status" value="1"/>
</dbReference>
<dbReference type="Pfam" id="PF05166">
    <property type="entry name" value="YcgL"/>
    <property type="match status" value="1"/>
</dbReference>
<dbReference type="SUPFAM" id="SSF160191">
    <property type="entry name" value="YcgL-like"/>
    <property type="match status" value="1"/>
</dbReference>
<dbReference type="PROSITE" id="PS51648">
    <property type="entry name" value="YCGL"/>
    <property type="match status" value="1"/>
</dbReference>
<protein>
    <recommendedName>
        <fullName evidence="1">YcgL domain-containing protein ABBFA_001807</fullName>
    </recommendedName>
</protein>
<organism>
    <name type="scientific">Acinetobacter baumannii (strain AB307-0294)</name>
    <dbReference type="NCBI Taxonomy" id="557600"/>
    <lineage>
        <taxon>Bacteria</taxon>
        <taxon>Pseudomonadati</taxon>
        <taxon>Pseudomonadota</taxon>
        <taxon>Gammaproteobacteria</taxon>
        <taxon>Moraxellales</taxon>
        <taxon>Moraxellaceae</taxon>
        <taxon>Acinetobacter</taxon>
        <taxon>Acinetobacter calcoaceticus/baumannii complex</taxon>
    </lineage>
</organism>
<reference key="1">
    <citation type="journal article" date="2008" name="J. Bacteriol.">
        <title>Comparative genome sequence analysis of multidrug-resistant Acinetobacter baumannii.</title>
        <authorList>
            <person name="Adams M.D."/>
            <person name="Goglin K."/>
            <person name="Molyneaux N."/>
            <person name="Hujer K.M."/>
            <person name="Lavender H."/>
            <person name="Jamison J.J."/>
            <person name="MacDonald I.J."/>
            <person name="Martin K.M."/>
            <person name="Russo T."/>
            <person name="Campagnari A.A."/>
            <person name="Hujer A.M."/>
            <person name="Bonomo R.A."/>
            <person name="Gill S.R."/>
        </authorList>
    </citation>
    <scope>NUCLEOTIDE SEQUENCE [LARGE SCALE GENOMIC DNA]</scope>
    <source>
        <strain>AB307-0294</strain>
    </source>
</reference>
<proteinExistence type="inferred from homology"/>
<accession>B7H3B2</accession>
<feature type="chain" id="PRO_0000375266" description="YcgL domain-containing protein ABBFA_001807">
    <location>
        <begin position="1"/>
        <end position="101"/>
    </location>
</feature>
<feature type="domain" description="YcgL" evidence="1">
    <location>
        <begin position="1"/>
        <end position="92"/>
    </location>
</feature>
<comment type="sequence caution" evidence="2">
    <conflict type="erroneous initiation">
        <sequence resource="EMBL-CDS" id="ACJ59251"/>
    </conflict>
</comment>
<sequence length="101" mass="11473">MHCDIYRSSKKDEMYIYIARPNYPDETEQADPFEKVPEAVLQAFGRATFVMHLELAPTRKLARVNVLHVLDSLQTKGFFIQMPPEGLINPNAVEPEGLRGA</sequence>
<gene>
    <name type="ordered locus">ABBFA_001807</name>
</gene>
<evidence type="ECO:0000255" key="1">
    <source>
        <dbReference type="HAMAP-Rule" id="MF_01866"/>
    </source>
</evidence>
<evidence type="ECO:0000305" key="2"/>
<name>Y1807_ACIB3</name>